<accession>Q7SEY9</accession>
<protein>
    <recommendedName>
        <fullName>Endoplasmic reticulum oxidoreductin-1</fullName>
        <ecNumber>1.8.4.-</ecNumber>
    </recommendedName>
</protein>
<dbReference type="EC" id="1.8.4.-"/>
<dbReference type="EMBL" id="CM002236">
    <property type="protein sequence ID" value="EAA35365.1"/>
    <property type="molecule type" value="Genomic_DNA"/>
</dbReference>
<dbReference type="RefSeq" id="XP_964601.1">
    <property type="nucleotide sequence ID" value="XM_959508.2"/>
</dbReference>
<dbReference type="SMR" id="Q7SEY9"/>
<dbReference type="FunCoup" id="Q7SEY9">
    <property type="interactions" value="711"/>
</dbReference>
<dbReference type="STRING" id="367110.Q7SEY9"/>
<dbReference type="GlyCosmos" id="Q7SEY9">
    <property type="glycosylation" value="4 sites, No reported glycans"/>
</dbReference>
<dbReference type="PaxDb" id="5141-EFNCRP00000001083"/>
<dbReference type="EnsemblFungi" id="EAA35365">
    <property type="protein sequence ID" value="EAA35365"/>
    <property type="gene ID" value="NCU02074"/>
</dbReference>
<dbReference type="GeneID" id="3880741"/>
<dbReference type="KEGG" id="ncr:NCU02074"/>
<dbReference type="VEuPathDB" id="FungiDB:NCU02074"/>
<dbReference type="HOGENOM" id="CLU_023061_1_0_1"/>
<dbReference type="InParanoid" id="Q7SEY9"/>
<dbReference type="OrthoDB" id="269384at2759"/>
<dbReference type="Proteomes" id="UP000001805">
    <property type="component" value="Chromosome 1, Linkage Group I"/>
</dbReference>
<dbReference type="GO" id="GO:0005789">
    <property type="term" value="C:endoplasmic reticulum membrane"/>
    <property type="evidence" value="ECO:0000318"/>
    <property type="project" value="GO_Central"/>
</dbReference>
<dbReference type="GO" id="GO:0071949">
    <property type="term" value="F:FAD binding"/>
    <property type="evidence" value="ECO:0007669"/>
    <property type="project" value="InterPro"/>
</dbReference>
<dbReference type="GO" id="GO:0015035">
    <property type="term" value="F:protein-disulfide reductase activity"/>
    <property type="evidence" value="ECO:0000318"/>
    <property type="project" value="GO_Central"/>
</dbReference>
<dbReference type="GO" id="GO:0016972">
    <property type="term" value="F:thiol oxidase activity"/>
    <property type="evidence" value="ECO:0007669"/>
    <property type="project" value="InterPro"/>
</dbReference>
<dbReference type="GO" id="GO:0034975">
    <property type="term" value="P:protein folding in endoplasmic reticulum"/>
    <property type="evidence" value="ECO:0000318"/>
    <property type="project" value="GO_Central"/>
</dbReference>
<dbReference type="InterPro" id="IPR007266">
    <property type="entry name" value="Ero1"/>
</dbReference>
<dbReference type="InterPro" id="IPR037192">
    <property type="entry name" value="ERO1-like_sf"/>
</dbReference>
<dbReference type="PANTHER" id="PTHR12613:SF0">
    <property type="entry name" value="ERO1-LIKE PROTEIN"/>
    <property type="match status" value="1"/>
</dbReference>
<dbReference type="PANTHER" id="PTHR12613">
    <property type="entry name" value="ERO1-RELATED"/>
    <property type="match status" value="1"/>
</dbReference>
<dbReference type="Pfam" id="PF04137">
    <property type="entry name" value="ERO1"/>
    <property type="match status" value="1"/>
</dbReference>
<dbReference type="PIRSF" id="PIRSF017205">
    <property type="entry name" value="ERO1"/>
    <property type="match status" value="1"/>
</dbReference>
<dbReference type="SUPFAM" id="SSF110019">
    <property type="entry name" value="ERO1-like"/>
    <property type="match status" value="1"/>
</dbReference>
<sequence length="668" mass="75607">MKPASRLFYLSLFALWSPEAQCKSDESCAISPKAIVSDACASYSTLEQLNRDIKPALEDLTRTTDFFSHYRLNLFNKECPFWNDENGMCGNIACAVETLDNEEDIPEVWRAKELGKLEGPRAKHPGKSVQKEEPKRPLQGKLGEDVGESCVVEYDDECDDRDYCVPDDEGASSKGDYVSLLRNPERFTGYAGDGAKQVWDAIYRENCFQKSSFPKSASLGDTYSVPKNPAAQDFRAVMQAAGRQHMLEQQREQNPLVPFVTKTGLESEDECLEKRVFYKIVSGMHASISTHLCWDFLNQTTGQWQPNLSCYINRLHKFPERISNLYFNYALLTRAVAKLGPYLSSHEEYTFCTGDPAQDADTRAKVLAVTSKAANTVPGPVFDESIMFKNGEGPSLKEDFRNRFRNISRLMDCVGCDKCRLWGKLQTAGYGTALKVLFEFANNDTSATSSETDEIPFKLKRTELVALFNTYARLSSSLDAIQKFRAMVEESEEGQQPQSHEQIEGSENSGAHHIPDRAKKPRHVIVPTPDAADHAEASDTNTATTAVDEAKAAGVTPAPKVEHQQQVEVDNNDDDDDDDEFHEFQRQPQQPDTDPNFVYKKRTLKDDFENEFRAVFAAFKLVIRSYLNLPALIYEITITELKRFWQFYVGLPVMPRTWEFRRPSLDEL</sequence>
<name>ERO1_NEUCR</name>
<proteinExistence type="inferred from homology"/>
<evidence type="ECO:0000250" key="1"/>
<evidence type="ECO:0000250" key="2">
    <source>
        <dbReference type="UniProtKB" id="Q03103"/>
    </source>
</evidence>
<evidence type="ECO:0000255" key="3"/>
<evidence type="ECO:0000256" key="4">
    <source>
        <dbReference type="SAM" id="MobiDB-lite"/>
    </source>
</evidence>
<evidence type="ECO:0000305" key="5"/>
<reference key="1">
    <citation type="journal article" date="2003" name="Nature">
        <title>The genome sequence of the filamentous fungus Neurospora crassa.</title>
        <authorList>
            <person name="Galagan J.E."/>
            <person name="Calvo S.E."/>
            <person name="Borkovich K.A."/>
            <person name="Selker E.U."/>
            <person name="Read N.D."/>
            <person name="Jaffe D.B."/>
            <person name="FitzHugh W."/>
            <person name="Ma L.-J."/>
            <person name="Smirnov S."/>
            <person name="Purcell S."/>
            <person name="Rehman B."/>
            <person name="Elkins T."/>
            <person name="Engels R."/>
            <person name="Wang S."/>
            <person name="Nielsen C.B."/>
            <person name="Butler J."/>
            <person name="Endrizzi M."/>
            <person name="Qui D."/>
            <person name="Ianakiev P."/>
            <person name="Bell-Pedersen D."/>
            <person name="Nelson M.A."/>
            <person name="Werner-Washburne M."/>
            <person name="Selitrennikoff C.P."/>
            <person name="Kinsey J.A."/>
            <person name="Braun E.L."/>
            <person name="Zelter A."/>
            <person name="Schulte U."/>
            <person name="Kothe G.O."/>
            <person name="Jedd G."/>
            <person name="Mewes H.-W."/>
            <person name="Staben C."/>
            <person name="Marcotte E."/>
            <person name="Greenberg D."/>
            <person name="Roy A."/>
            <person name="Foley K."/>
            <person name="Naylor J."/>
            <person name="Stange-Thomann N."/>
            <person name="Barrett R."/>
            <person name="Gnerre S."/>
            <person name="Kamal M."/>
            <person name="Kamvysselis M."/>
            <person name="Mauceli E.W."/>
            <person name="Bielke C."/>
            <person name="Rudd S."/>
            <person name="Frishman D."/>
            <person name="Krystofova S."/>
            <person name="Rasmussen C."/>
            <person name="Metzenberg R.L."/>
            <person name="Perkins D.D."/>
            <person name="Kroken S."/>
            <person name="Cogoni C."/>
            <person name="Macino G."/>
            <person name="Catcheside D.E.A."/>
            <person name="Li W."/>
            <person name="Pratt R.J."/>
            <person name="Osmani S.A."/>
            <person name="DeSouza C.P.C."/>
            <person name="Glass N.L."/>
            <person name="Orbach M.J."/>
            <person name="Berglund J.A."/>
            <person name="Voelker R."/>
            <person name="Yarden O."/>
            <person name="Plamann M."/>
            <person name="Seiler S."/>
            <person name="Dunlap J.C."/>
            <person name="Radford A."/>
            <person name="Aramayo R."/>
            <person name="Natvig D.O."/>
            <person name="Alex L.A."/>
            <person name="Mannhaupt G."/>
            <person name="Ebbole D.J."/>
            <person name="Freitag M."/>
            <person name="Paulsen I."/>
            <person name="Sachs M.S."/>
            <person name="Lander E.S."/>
            <person name="Nusbaum C."/>
            <person name="Birren B.W."/>
        </authorList>
    </citation>
    <scope>NUCLEOTIDE SEQUENCE [LARGE SCALE GENOMIC DNA]</scope>
    <source>
        <strain>ATCC 24698 / 74-OR23-1A / CBS 708.71 / DSM 1257 / FGSC 987</strain>
    </source>
</reference>
<comment type="function">
    <text evidence="1">Essential oxidoreductase that oxidizes proteins in the endoplasmic reticulum to produce disulfide bonds. Acts by oxidizing directly pdi1 isomerase through a direct disulfide exchange. Does not act as a direct oxidant of folding substrate, but relies on pdi1 to transfer oxidizing equivalent. Does not oxidize all pdi related proteins, suggesting that it can discriminate between pdi1 and related proteins. Its reoxidation probably involves electron transfer to molecular oxygen via FAD. Acts independently of glutathione. May be responsible for a significant proportion of reactive oxygen species (ROS) in the cell, thereby being a source of oxidative stress (By similarity).</text>
</comment>
<comment type="cofactor">
    <cofactor evidence="2">
        <name>FAD</name>
        <dbReference type="ChEBI" id="CHEBI:57692"/>
    </cofactor>
</comment>
<comment type="subunit">
    <text evidence="1">May function both as a monomer and a homodimer.</text>
</comment>
<comment type="subcellular location">
    <subcellularLocation>
        <location evidence="1">Endoplasmic reticulum membrane</location>
        <topology evidence="1">Peripheral membrane protein</topology>
        <orientation evidence="1">Lumenal side</orientation>
    </subcellularLocation>
</comment>
<comment type="similarity">
    <text evidence="5">Belongs to the EROs family.</text>
</comment>
<feature type="signal peptide" evidence="3">
    <location>
        <begin position="1"/>
        <end position="22"/>
    </location>
</feature>
<feature type="chain" id="PRO_0000008426" description="Endoplasmic reticulum oxidoreductin-1">
    <location>
        <begin position="23"/>
        <end position="668"/>
    </location>
</feature>
<feature type="region of interest" description="Disordered" evidence="4">
    <location>
        <begin position="116"/>
        <end position="142"/>
    </location>
</feature>
<feature type="region of interest" description="Disordered" evidence="4">
    <location>
        <begin position="488"/>
        <end position="519"/>
    </location>
</feature>
<feature type="region of interest" description="Disordered" evidence="4">
    <location>
        <begin position="554"/>
        <end position="597"/>
    </location>
</feature>
<feature type="compositionally biased region" description="Polar residues" evidence="4">
    <location>
        <begin position="494"/>
        <end position="509"/>
    </location>
</feature>
<feature type="compositionally biased region" description="Acidic residues" evidence="4">
    <location>
        <begin position="570"/>
        <end position="581"/>
    </location>
</feature>
<feature type="active site" description="Nucleophile" evidence="2">
    <location>
        <position position="416"/>
    </location>
</feature>
<feature type="active site" evidence="2">
    <location>
        <position position="419"/>
    </location>
</feature>
<feature type="binding site" evidence="2">
    <location>
        <position position="186"/>
    </location>
    <ligand>
        <name>FAD</name>
        <dbReference type="ChEBI" id="CHEBI:57692"/>
    </ligand>
</feature>
<feature type="binding site" evidence="2">
    <location>
        <position position="188"/>
    </location>
    <ligand>
        <name>FAD</name>
        <dbReference type="ChEBI" id="CHEBI:57692"/>
    </ligand>
</feature>
<feature type="binding site" evidence="2">
    <location>
        <position position="199"/>
    </location>
    <ligand>
        <name>FAD</name>
        <dbReference type="ChEBI" id="CHEBI:57692"/>
    </ligand>
</feature>
<feature type="binding site" evidence="2">
    <location>
        <position position="282"/>
    </location>
    <ligand>
        <name>FAD</name>
        <dbReference type="ChEBI" id="CHEBI:57692"/>
    </ligand>
</feature>
<feature type="binding site" evidence="2">
    <location>
        <position position="285"/>
    </location>
    <ligand>
        <name>FAD</name>
        <dbReference type="ChEBI" id="CHEBI:57692"/>
    </ligand>
</feature>
<feature type="binding site" evidence="2">
    <location>
        <position position="314"/>
    </location>
    <ligand>
        <name>FAD</name>
        <dbReference type="ChEBI" id="CHEBI:57692"/>
    </ligand>
</feature>
<feature type="glycosylation site" description="N-linked (GlcNAc...) asparagine" evidence="3">
    <location>
        <position position="298"/>
    </location>
</feature>
<feature type="glycosylation site" description="N-linked (GlcNAc...) asparagine" evidence="3">
    <location>
        <position position="307"/>
    </location>
</feature>
<feature type="glycosylation site" description="N-linked (GlcNAc...) asparagine" evidence="3">
    <location>
        <position position="406"/>
    </location>
</feature>
<feature type="glycosylation site" description="N-linked (GlcNAc...) asparagine" evidence="3">
    <location>
        <position position="443"/>
    </location>
</feature>
<feature type="disulfide bond" evidence="2">
    <location>
        <begin position="79"/>
        <end position="413"/>
    </location>
</feature>
<feature type="disulfide bond" description="Redox-active" evidence="2">
    <location>
        <begin position="89"/>
        <end position="94"/>
    </location>
</feature>
<feature type="disulfide bond" evidence="2">
    <location>
        <begin position="150"/>
        <end position="352"/>
    </location>
</feature>
<feature type="disulfide bond" description="Redox-active" evidence="2">
    <location>
        <begin position="416"/>
        <end position="419"/>
    </location>
</feature>
<gene>
    <name type="primary">ero-1</name>
    <name type="ORF">NCU02074</name>
</gene>
<keyword id="KW-1015">Disulfide bond</keyword>
<keyword id="KW-0249">Electron transport</keyword>
<keyword id="KW-0256">Endoplasmic reticulum</keyword>
<keyword id="KW-0274">FAD</keyword>
<keyword id="KW-0285">Flavoprotein</keyword>
<keyword id="KW-0325">Glycoprotein</keyword>
<keyword id="KW-0472">Membrane</keyword>
<keyword id="KW-0560">Oxidoreductase</keyword>
<keyword id="KW-0676">Redox-active center</keyword>
<keyword id="KW-1185">Reference proteome</keyword>
<keyword id="KW-0732">Signal</keyword>
<keyword id="KW-0813">Transport</keyword>
<organism>
    <name type="scientific">Neurospora crassa (strain ATCC 24698 / 74-OR23-1A / CBS 708.71 / DSM 1257 / FGSC 987)</name>
    <dbReference type="NCBI Taxonomy" id="367110"/>
    <lineage>
        <taxon>Eukaryota</taxon>
        <taxon>Fungi</taxon>
        <taxon>Dikarya</taxon>
        <taxon>Ascomycota</taxon>
        <taxon>Pezizomycotina</taxon>
        <taxon>Sordariomycetes</taxon>
        <taxon>Sordariomycetidae</taxon>
        <taxon>Sordariales</taxon>
        <taxon>Sordariaceae</taxon>
        <taxon>Neurospora</taxon>
    </lineage>
</organism>